<gene>
    <name evidence="1" type="primary">rpmC</name>
    <name type="ordered locus">Shal_4126</name>
</gene>
<accession>B0TM04</accession>
<reference key="1">
    <citation type="submission" date="2008-01" db="EMBL/GenBank/DDBJ databases">
        <title>Complete sequence of Shewanella halifaxensis HAW-EB4.</title>
        <authorList>
            <consortium name="US DOE Joint Genome Institute"/>
            <person name="Copeland A."/>
            <person name="Lucas S."/>
            <person name="Lapidus A."/>
            <person name="Glavina del Rio T."/>
            <person name="Dalin E."/>
            <person name="Tice H."/>
            <person name="Bruce D."/>
            <person name="Goodwin L."/>
            <person name="Pitluck S."/>
            <person name="Sims D."/>
            <person name="Brettin T."/>
            <person name="Detter J.C."/>
            <person name="Han C."/>
            <person name="Kuske C.R."/>
            <person name="Schmutz J."/>
            <person name="Larimer F."/>
            <person name="Land M."/>
            <person name="Hauser L."/>
            <person name="Kyrpides N."/>
            <person name="Kim E."/>
            <person name="Zhao J.-S."/>
            <person name="Richardson P."/>
        </authorList>
    </citation>
    <scope>NUCLEOTIDE SEQUENCE [LARGE SCALE GENOMIC DNA]</scope>
    <source>
        <strain>HAW-EB4</strain>
    </source>
</reference>
<dbReference type="EMBL" id="CP000931">
    <property type="protein sequence ID" value="ABZ78666.1"/>
    <property type="molecule type" value="Genomic_DNA"/>
</dbReference>
<dbReference type="RefSeq" id="WP_012144642.1">
    <property type="nucleotide sequence ID" value="NC_010334.1"/>
</dbReference>
<dbReference type="SMR" id="B0TM04"/>
<dbReference type="STRING" id="458817.Shal_4126"/>
<dbReference type="KEGG" id="shl:Shal_4126"/>
<dbReference type="eggNOG" id="COG0255">
    <property type="taxonomic scope" value="Bacteria"/>
</dbReference>
<dbReference type="HOGENOM" id="CLU_158491_1_2_6"/>
<dbReference type="OrthoDB" id="9815192at2"/>
<dbReference type="Proteomes" id="UP000001317">
    <property type="component" value="Chromosome"/>
</dbReference>
<dbReference type="GO" id="GO:0022625">
    <property type="term" value="C:cytosolic large ribosomal subunit"/>
    <property type="evidence" value="ECO:0007669"/>
    <property type="project" value="TreeGrafter"/>
</dbReference>
<dbReference type="GO" id="GO:0003735">
    <property type="term" value="F:structural constituent of ribosome"/>
    <property type="evidence" value="ECO:0007669"/>
    <property type="project" value="InterPro"/>
</dbReference>
<dbReference type="GO" id="GO:0006412">
    <property type="term" value="P:translation"/>
    <property type="evidence" value="ECO:0007669"/>
    <property type="project" value="UniProtKB-UniRule"/>
</dbReference>
<dbReference type="CDD" id="cd00427">
    <property type="entry name" value="Ribosomal_L29_HIP"/>
    <property type="match status" value="1"/>
</dbReference>
<dbReference type="FunFam" id="1.10.287.310:FF:000001">
    <property type="entry name" value="50S ribosomal protein L29"/>
    <property type="match status" value="1"/>
</dbReference>
<dbReference type="Gene3D" id="1.10.287.310">
    <property type="match status" value="1"/>
</dbReference>
<dbReference type="HAMAP" id="MF_00374">
    <property type="entry name" value="Ribosomal_uL29"/>
    <property type="match status" value="1"/>
</dbReference>
<dbReference type="InterPro" id="IPR050063">
    <property type="entry name" value="Ribosomal_protein_uL29"/>
</dbReference>
<dbReference type="InterPro" id="IPR001854">
    <property type="entry name" value="Ribosomal_uL29"/>
</dbReference>
<dbReference type="InterPro" id="IPR018254">
    <property type="entry name" value="Ribosomal_uL29_CS"/>
</dbReference>
<dbReference type="InterPro" id="IPR036049">
    <property type="entry name" value="Ribosomal_uL29_sf"/>
</dbReference>
<dbReference type="NCBIfam" id="TIGR00012">
    <property type="entry name" value="L29"/>
    <property type="match status" value="1"/>
</dbReference>
<dbReference type="PANTHER" id="PTHR10916">
    <property type="entry name" value="60S RIBOSOMAL PROTEIN L35/50S RIBOSOMAL PROTEIN L29"/>
    <property type="match status" value="1"/>
</dbReference>
<dbReference type="PANTHER" id="PTHR10916:SF0">
    <property type="entry name" value="LARGE RIBOSOMAL SUBUNIT PROTEIN UL29C"/>
    <property type="match status" value="1"/>
</dbReference>
<dbReference type="Pfam" id="PF00831">
    <property type="entry name" value="Ribosomal_L29"/>
    <property type="match status" value="1"/>
</dbReference>
<dbReference type="SUPFAM" id="SSF46561">
    <property type="entry name" value="Ribosomal protein L29 (L29p)"/>
    <property type="match status" value="1"/>
</dbReference>
<dbReference type="PROSITE" id="PS00579">
    <property type="entry name" value="RIBOSOMAL_L29"/>
    <property type="match status" value="1"/>
</dbReference>
<protein>
    <recommendedName>
        <fullName evidence="1">Large ribosomal subunit protein uL29</fullName>
    </recommendedName>
    <alternativeName>
        <fullName evidence="2">50S ribosomal protein L29</fullName>
    </alternativeName>
</protein>
<comment type="similarity">
    <text evidence="1">Belongs to the universal ribosomal protein uL29 family.</text>
</comment>
<sequence>MKASELTEKSVEELNAELLGLLREQFNLRMQHATGQLTQTHQLKIVRRNIARVKTIITSKAGA</sequence>
<feature type="chain" id="PRO_1000079905" description="Large ribosomal subunit protein uL29">
    <location>
        <begin position="1"/>
        <end position="63"/>
    </location>
</feature>
<keyword id="KW-0687">Ribonucleoprotein</keyword>
<keyword id="KW-0689">Ribosomal protein</keyword>
<proteinExistence type="inferred from homology"/>
<organism>
    <name type="scientific">Shewanella halifaxensis (strain HAW-EB4)</name>
    <dbReference type="NCBI Taxonomy" id="458817"/>
    <lineage>
        <taxon>Bacteria</taxon>
        <taxon>Pseudomonadati</taxon>
        <taxon>Pseudomonadota</taxon>
        <taxon>Gammaproteobacteria</taxon>
        <taxon>Alteromonadales</taxon>
        <taxon>Shewanellaceae</taxon>
        <taxon>Shewanella</taxon>
    </lineage>
</organism>
<evidence type="ECO:0000255" key="1">
    <source>
        <dbReference type="HAMAP-Rule" id="MF_00374"/>
    </source>
</evidence>
<evidence type="ECO:0000305" key="2"/>
<name>RL29_SHEHH</name>